<dbReference type="EC" id="7.1.1.2"/>
<dbReference type="EMBL" id="U07279">
    <property type="protein sequence ID" value="AAA76612.1"/>
    <property type="molecule type" value="Genomic_DNA"/>
</dbReference>
<dbReference type="EMBL" id="U07280">
    <property type="protein sequence ID" value="AAA76613.1"/>
    <property type="molecule type" value="Genomic_DNA"/>
</dbReference>
<dbReference type="SMR" id="P84301"/>
<dbReference type="GO" id="GO:0005743">
    <property type="term" value="C:mitochondrial inner membrane"/>
    <property type="evidence" value="ECO:0007669"/>
    <property type="project" value="UniProtKB-SubCell"/>
</dbReference>
<dbReference type="GO" id="GO:0008137">
    <property type="term" value="F:NADH dehydrogenase (ubiquinone) activity"/>
    <property type="evidence" value="ECO:0007669"/>
    <property type="project" value="UniProtKB-EC"/>
</dbReference>
<dbReference type="GO" id="GO:0009060">
    <property type="term" value="P:aerobic respiration"/>
    <property type="evidence" value="ECO:0007669"/>
    <property type="project" value="TreeGrafter"/>
</dbReference>
<dbReference type="InterPro" id="IPR001694">
    <property type="entry name" value="NADH_UbQ_OxRdtase_su1/FPO"/>
</dbReference>
<dbReference type="InterPro" id="IPR018086">
    <property type="entry name" value="NADH_UbQ_OxRdtase_su1_CS"/>
</dbReference>
<dbReference type="PANTHER" id="PTHR11432">
    <property type="entry name" value="NADH DEHYDROGENASE SUBUNIT 1"/>
    <property type="match status" value="1"/>
</dbReference>
<dbReference type="PANTHER" id="PTHR11432:SF3">
    <property type="entry name" value="NADH-UBIQUINONE OXIDOREDUCTASE CHAIN 1"/>
    <property type="match status" value="1"/>
</dbReference>
<dbReference type="Pfam" id="PF00146">
    <property type="entry name" value="NADHdh"/>
    <property type="match status" value="1"/>
</dbReference>
<dbReference type="PROSITE" id="PS00667">
    <property type="entry name" value="COMPLEX1_ND1_1"/>
    <property type="match status" value="1"/>
</dbReference>
<evidence type="ECO:0000250" key="1"/>
<evidence type="ECO:0000255" key="2"/>
<evidence type="ECO:0000305" key="3"/>
<sequence length="163" mass="18204">MEFILSLVGSLLLIICVLVSVAFLTLLERKVLGYIQIRKGPNKVGLMGIPQPFCDAIKLFTKEQTYPLLSNYLSYYISPIFSLFLSLFVWMCMPFFVKLYSFNLGGLFFLCCTSLGVYTVMVAGWSSNSNYALLGGLRAVAQTISYEVSLALIGFKILLFSLL</sequence>
<accession>P84301</accession>
<accession>P51927</accession>
<accession>P51929</accession>
<accession>Q34282</accession>
<accession>Q34292</accession>
<comment type="function">
    <text evidence="1">Core subunit of the mitochondrial membrane respiratory chain NADH dehydrogenase (Complex I) that is believed to belong to the minimal assembly required for catalysis. Complex I functions in the transfer of electrons from NADH to the respiratory chain. The immediate electron acceptor for the enzyme is believed to be ubiquinone (By similarity).</text>
</comment>
<comment type="catalytic activity">
    <reaction>
        <text>a ubiquinone + NADH + 5 H(+)(in) = a ubiquinol + NAD(+) + 4 H(+)(out)</text>
        <dbReference type="Rhea" id="RHEA:29091"/>
        <dbReference type="Rhea" id="RHEA-COMP:9565"/>
        <dbReference type="Rhea" id="RHEA-COMP:9566"/>
        <dbReference type="ChEBI" id="CHEBI:15378"/>
        <dbReference type="ChEBI" id="CHEBI:16389"/>
        <dbReference type="ChEBI" id="CHEBI:17976"/>
        <dbReference type="ChEBI" id="CHEBI:57540"/>
        <dbReference type="ChEBI" id="CHEBI:57945"/>
        <dbReference type="EC" id="7.1.1.2"/>
    </reaction>
</comment>
<comment type="subcellular location">
    <subcellularLocation>
        <location evidence="1">Mitochondrion inner membrane</location>
        <topology evidence="1">Multi-pass membrane protein</topology>
    </subcellularLocation>
</comment>
<comment type="similarity">
    <text evidence="3">Belongs to the complex I subunit 1 family.</text>
</comment>
<name>NU1M_DROAL</name>
<protein>
    <recommendedName>
        <fullName>NADH-ubiquinone oxidoreductase chain 1</fullName>
        <ecNumber>7.1.1.2</ecNumber>
    </recommendedName>
    <alternativeName>
        <fullName>NADH dehydrogenase subunit 1</fullName>
    </alternativeName>
</protein>
<keyword id="KW-0249">Electron transport</keyword>
<keyword id="KW-0472">Membrane</keyword>
<keyword id="KW-0496">Mitochondrion</keyword>
<keyword id="KW-0999">Mitochondrion inner membrane</keyword>
<keyword id="KW-0520">NAD</keyword>
<keyword id="KW-0679">Respiratory chain</keyword>
<keyword id="KW-1278">Translocase</keyword>
<keyword id="KW-0812">Transmembrane</keyword>
<keyword id="KW-1133">Transmembrane helix</keyword>
<keyword id="KW-0813">Transport</keyword>
<keyword id="KW-0830">Ubiquinone</keyword>
<geneLocation type="mitochondrion"/>
<gene>
    <name type="primary">mt:ND1</name>
    <name type="synonym">ND1</name>
</gene>
<organism>
    <name type="scientific">Drosophila algonquin</name>
    <name type="common">Fruit fly</name>
    <dbReference type="NCBI Taxonomy" id="7247"/>
    <lineage>
        <taxon>Eukaryota</taxon>
        <taxon>Metazoa</taxon>
        <taxon>Ecdysozoa</taxon>
        <taxon>Arthropoda</taxon>
        <taxon>Hexapoda</taxon>
        <taxon>Insecta</taxon>
        <taxon>Pterygota</taxon>
        <taxon>Neoptera</taxon>
        <taxon>Endopterygota</taxon>
        <taxon>Diptera</taxon>
        <taxon>Brachycera</taxon>
        <taxon>Muscomorpha</taxon>
        <taxon>Ephydroidea</taxon>
        <taxon>Drosophilidae</taxon>
        <taxon>Drosophila</taxon>
        <taxon>Sophophora</taxon>
    </lineage>
</organism>
<proteinExistence type="inferred from homology"/>
<feature type="chain" id="PRO_0000117386" description="NADH-ubiquinone oxidoreductase chain 1">
    <location>
        <begin position="1"/>
        <end position="163"/>
    </location>
</feature>
<feature type="transmembrane region" description="Helical" evidence="2">
    <location>
        <begin position="3"/>
        <end position="23"/>
    </location>
</feature>
<feature type="transmembrane region" description="Helical" evidence="2">
    <location>
        <begin position="77"/>
        <end position="97"/>
    </location>
</feature>
<feature type="transmembrane region" description="Helical" evidence="2">
    <location>
        <begin position="104"/>
        <end position="124"/>
    </location>
</feature>
<feature type="transmembrane region" description="Helical" evidence="2">
    <location>
        <begin position="143"/>
        <end position="163"/>
    </location>
</feature>
<feature type="non-consecutive residues" evidence="3">
    <location>
        <begin position="152"/>
        <end position="153"/>
    </location>
</feature>
<reference key="1">
    <citation type="journal article" date="1994" name="J. Mol. Evol.">
        <title>Phylogeny of the Drosophila obscura species group deduced from mitochondrial DNA sequences.</title>
        <authorList>
            <person name="Barrio E."/>
            <person name="Latorre A."/>
            <person name="Moya A."/>
        </authorList>
    </citation>
    <scope>NUCLEOTIDE SEQUENCE [GENOMIC DNA]</scope>
</reference>